<keyword id="KW-0002">3D-structure</keyword>
<keyword id="KW-0025">Alternative splicing</keyword>
<keyword id="KW-0238">DNA-binding</keyword>
<keyword id="KW-1017">Isopeptide bond</keyword>
<keyword id="KW-0479">Metal-binding</keyword>
<keyword id="KW-0539">Nucleus</keyword>
<keyword id="KW-1267">Proteomics identification</keyword>
<keyword id="KW-1185">Reference proteome</keyword>
<keyword id="KW-0677">Repeat</keyword>
<keyword id="KW-0804">Transcription</keyword>
<keyword id="KW-0805">Transcription regulation</keyword>
<keyword id="KW-0832">Ubl conjugation</keyword>
<keyword id="KW-0862">Zinc</keyword>
<keyword id="KW-0863">Zinc-finger</keyword>
<reference key="1">
    <citation type="submission" date="2001-04" db="EMBL/GenBank/DDBJ databases">
        <title>RANKL regulated zinc finger protein in osteoclastogenesis.</title>
        <authorList>
            <person name="Aitken C.J."/>
            <person name="Nicholson G.C."/>
        </authorList>
    </citation>
    <scope>NUCLEOTIDE SEQUENCE [MRNA] (ISOFORM 1)</scope>
    <scope>VARIANT ASP-264</scope>
</reference>
<reference key="2">
    <citation type="journal article" date="2004" name="Nat. Genet.">
        <title>Complete sequencing and characterization of 21,243 full-length human cDNAs.</title>
        <authorList>
            <person name="Ota T."/>
            <person name="Suzuki Y."/>
            <person name="Nishikawa T."/>
            <person name="Otsuki T."/>
            <person name="Sugiyama T."/>
            <person name="Irie R."/>
            <person name="Wakamatsu A."/>
            <person name="Hayashi K."/>
            <person name="Sato H."/>
            <person name="Nagai K."/>
            <person name="Kimura K."/>
            <person name="Makita H."/>
            <person name="Sekine M."/>
            <person name="Obayashi M."/>
            <person name="Nishi T."/>
            <person name="Shibahara T."/>
            <person name="Tanaka T."/>
            <person name="Ishii S."/>
            <person name="Yamamoto J."/>
            <person name="Saito K."/>
            <person name="Kawai Y."/>
            <person name="Isono Y."/>
            <person name="Nakamura Y."/>
            <person name="Nagahari K."/>
            <person name="Murakami K."/>
            <person name="Yasuda T."/>
            <person name="Iwayanagi T."/>
            <person name="Wagatsuma M."/>
            <person name="Shiratori A."/>
            <person name="Sudo H."/>
            <person name="Hosoiri T."/>
            <person name="Kaku Y."/>
            <person name="Kodaira H."/>
            <person name="Kondo H."/>
            <person name="Sugawara M."/>
            <person name="Takahashi M."/>
            <person name="Kanda K."/>
            <person name="Yokoi T."/>
            <person name="Furuya T."/>
            <person name="Kikkawa E."/>
            <person name="Omura Y."/>
            <person name="Abe K."/>
            <person name="Kamihara K."/>
            <person name="Katsuta N."/>
            <person name="Sato K."/>
            <person name="Tanikawa M."/>
            <person name="Yamazaki M."/>
            <person name="Ninomiya K."/>
            <person name="Ishibashi T."/>
            <person name="Yamashita H."/>
            <person name="Murakawa K."/>
            <person name="Fujimori K."/>
            <person name="Tanai H."/>
            <person name="Kimata M."/>
            <person name="Watanabe M."/>
            <person name="Hiraoka S."/>
            <person name="Chiba Y."/>
            <person name="Ishida S."/>
            <person name="Ono Y."/>
            <person name="Takiguchi S."/>
            <person name="Watanabe S."/>
            <person name="Yosida M."/>
            <person name="Hotuta T."/>
            <person name="Kusano J."/>
            <person name="Kanehori K."/>
            <person name="Takahashi-Fujii A."/>
            <person name="Hara H."/>
            <person name="Tanase T.-O."/>
            <person name="Nomura Y."/>
            <person name="Togiya S."/>
            <person name="Komai F."/>
            <person name="Hara R."/>
            <person name="Takeuchi K."/>
            <person name="Arita M."/>
            <person name="Imose N."/>
            <person name="Musashino K."/>
            <person name="Yuuki H."/>
            <person name="Oshima A."/>
            <person name="Sasaki N."/>
            <person name="Aotsuka S."/>
            <person name="Yoshikawa Y."/>
            <person name="Matsunawa H."/>
            <person name="Ichihara T."/>
            <person name="Shiohata N."/>
            <person name="Sano S."/>
            <person name="Moriya S."/>
            <person name="Momiyama H."/>
            <person name="Satoh N."/>
            <person name="Takami S."/>
            <person name="Terashima Y."/>
            <person name="Suzuki O."/>
            <person name="Nakagawa S."/>
            <person name="Senoh A."/>
            <person name="Mizoguchi H."/>
            <person name="Goto Y."/>
            <person name="Shimizu F."/>
            <person name="Wakebe H."/>
            <person name="Hishigaki H."/>
            <person name="Watanabe T."/>
            <person name="Sugiyama A."/>
            <person name="Takemoto M."/>
            <person name="Kawakami B."/>
            <person name="Yamazaki M."/>
            <person name="Watanabe K."/>
            <person name="Kumagai A."/>
            <person name="Itakura S."/>
            <person name="Fukuzumi Y."/>
            <person name="Fujimori Y."/>
            <person name="Komiyama M."/>
            <person name="Tashiro H."/>
            <person name="Tanigami A."/>
            <person name="Fujiwara T."/>
            <person name="Ono T."/>
            <person name="Yamada K."/>
            <person name="Fujii Y."/>
            <person name="Ozaki K."/>
            <person name="Hirao M."/>
            <person name="Ohmori Y."/>
            <person name="Kawabata A."/>
            <person name="Hikiji T."/>
            <person name="Kobatake N."/>
            <person name="Inagaki H."/>
            <person name="Ikema Y."/>
            <person name="Okamoto S."/>
            <person name="Okitani R."/>
            <person name="Kawakami T."/>
            <person name="Noguchi S."/>
            <person name="Itoh T."/>
            <person name="Shigeta K."/>
            <person name="Senba T."/>
            <person name="Matsumura K."/>
            <person name="Nakajima Y."/>
            <person name="Mizuno T."/>
            <person name="Morinaga M."/>
            <person name="Sasaki M."/>
            <person name="Togashi T."/>
            <person name="Oyama M."/>
            <person name="Hata H."/>
            <person name="Watanabe M."/>
            <person name="Komatsu T."/>
            <person name="Mizushima-Sugano J."/>
            <person name="Satoh T."/>
            <person name="Shirai Y."/>
            <person name="Takahashi Y."/>
            <person name="Nakagawa K."/>
            <person name="Okumura K."/>
            <person name="Nagase T."/>
            <person name="Nomura N."/>
            <person name="Kikuchi H."/>
            <person name="Masuho Y."/>
            <person name="Yamashita R."/>
            <person name="Nakai K."/>
            <person name="Yada T."/>
            <person name="Nakamura Y."/>
            <person name="Ohara O."/>
            <person name="Isogai T."/>
            <person name="Sugano S."/>
        </authorList>
    </citation>
    <scope>NUCLEOTIDE SEQUENCE [LARGE SCALE MRNA] (ISOFORM 2)</scope>
    <scope>VARIANT ASP-264</scope>
    <source>
        <tissue>Brain</tissue>
    </source>
</reference>
<reference key="3">
    <citation type="journal article" date="2004" name="Nature">
        <title>The DNA sequence and biology of human chromosome 19.</title>
        <authorList>
            <person name="Grimwood J."/>
            <person name="Gordon L.A."/>
            <person name="Olsen A.S."/>
            <person name="Terry A."/>
            <person name="Schmutz J."/>
            <person name="Lamerdin J.E."/>
            <person name="Hellsten U."/>
            <person name="Goodstein D."/>
            <person name="Couronne O."/>
            <person name="Tran-Gyamfi M."/>
            <person name="Aerts A."/>
            <person name="Altherr M."/>
            <person name="Ashworth L."/>
            <person name="Bajorek E."/>
            <person name="Black S."/>
            <person name="Branscomb E."/>
            <person name="Caenepeel S."/>
            <person name="Carrano A.V."/>
            <person name="Caoile C."/>
            <person name="Chan Y.M."/>
            <person name="Christensen M."/>
            <person name="Cleland C.A."/>
            <person name="Copeland A."/>
            <person name="Dalin E."/>
            <person name="Dehal P."/>
            <person name="Denys M."/>
            <person name="Detter J.C."/>
            <person name="Escobar J."/>
            <person name="Flowers D."/>
            <person name="Fotopulos D."/>
            <person name="Garcia C."/>
            <person name="Georgescu A.M."/>
            <person name="Glavina T."/>
            <person name="Gomez M."/>
            <person name="Gonzales E."/>
            <person name="Groza M."/>
            <person name="Hammon N."/>
            <person name="Hawkins T."/>
            <person name="Haydu L."/>
            <person name="Ho I."/>
            <person name="Huang W."/>
            <person name="Israni S."/>
            <person name="Jett J."/>
            <person name="Kadner K."/>
            <person name="Kimball H."/>
            <person name="Kobayashi A."/>
            <person name="Larionov V."/>
            <person name="Leem S.-H."/>
            <person name="Lopez F."/>
            <person name="Lou Y."/>
            <person name="Lowry S."/>
            <person name="Malfatti S."/>
            <person name="Martinez D."/>
            <person name="McCready P.M."/>
            <person name="Medina C."/>
            <person name="Morgan J."/>
            <person name="Nelson K."/>
            <person name="Nolan M."/>
            <person name="Ovcharenko I."/>
            <person name="Pitluck S."/>
            <person name="Pollard M."/>
            <person name="Popkie A.P."/>
            <person name="Predki P."/>
            <person name="Quan G."/>
            <person name="Ramirez L."/>
            <person name="Rash S."/>
            <person name="Retterer J."/>
            <person name="Rodriguez A."/>
            <person name="Rogers S."/>
            <person name="Salamov A."/>
            <person name="Salazar A."/>
            <person name="She X."/>
            <person name="Smith D."/>
            <person name="Slezak T."/>
            <person name="Solovyev V."/>
            <person name="Thayer N."/>
            <person name="Tice H."/>
            <person name="Tsai M."/>
            <person name="Ustaszewska A."/>
            <person name="Vo N."/>
            <person name="Wagner M."/>
            <person name="Wheeler J."/>
            <person name="Wu K."/>
            <person name="Xie G."/>
            <person name="Yang J."/>
            <person name="Dubchak I."/>
            <person name="Furey T.S."/>
            <person name="DeJong P."/>
            <person name="Dickson M."/>
            <person name="Gordon D."/>
            <person name="Eichler E.E."/>
            <person name="Pennacchio L.A."/>
            <person name="Richardson P."/>
            <person name="Stubbs L."/>
            <person name="Rokhsar D.S."/>
            <person name="Myers R.M."/>
            <person name="Rubin E.M."/>
            <person name="Lucas S.M."/>
        </authorList>
    </citation>
    <scope>NUCLEOTIDE SEQUENCE [LARGE SCALE GENOMIC DNA]</scope>
</reference>
<reference key="4">
    <citation type="submission" date="2005-07" db="EMBL/GenBank/DDBJ databases">
        <authorList>
            <person name="Mural R.J."/>
            <person name="Istrail S."/>
            <person name="Sutton G.G."/>
            <person name="Florea L."/>
            <person name="Halpern A.L."/>
            <person name="Mobarry C.M."/>
            <person name="Lippert R."/>
            <person name="Walenz B."/>
            <person name="Shatkay H."/>
            <person name="Dew I."/>
            <person name="Miller J.R."/>
            <person name="Flanigan M.J."/>
            <person name="Edwards N.J."/>
            <person name="Bolanos R."/>
            <person name="Fasulo D."/>
            <person name="Halldorsson B.V."/>
            <person name="Hannenhalli S."/>
            <person name="Turner R."/>
            <person name="Yooseph S."/>
            <person name="Lu F."/>
            <person name="Nusskern D.R."/>
            <person name="Shue B.C."/>
            <person name="Zheng X.H."/>
            <person name="Zhong F."/>
            <person name="Delcher A.L."/>
            <person name="Huson D.H."/>
            <person name="Kravitz S.A."/>
            <person name="Mouchard L."/>
            <person name="Reinert K."/>
            <person name="Remington K.A."/>
            <person name="Clark A.G."/>
            <person name="Waterman M.S."/>
            <person name="Eichler E.E."/>
            <person name="Adams M.D."/>
            <person name="Hunkapiller M.W."/>
            <person name="Myers E.W."/>
            <person name="Venter J.C."/>
        </authorList>
    </citation>
    <scope>NUCLEOTIDE SEQUENCE [LARGE SCALE GENOMIC DNA]</scope>
</reference>
<reference key="5">
    <citation type="journal article" date="2004" name="Genome Res.">
        <title>The status, quality, and expansion of the NIH full-length cDNA project: the Mammalian Gene Collection (MGC).</title>
        <authorList>
            <consortium name="The MGC Project Team"/>
        </authorList>
    </citation>
    <scope>NUCLEOTIDE SEQUENCE [LARGE SCALE MRNA] (ISOFORM 1)</scope>
    <scope>VARIANT ASP-264</scope>
    <source>
        <tissue>Testis</tissue>
    </source>
</reference>
<reference key="6">
    <citation type="journal article" date="2007" name="BMC Genomics">
        <title>The full-ORF clone resource of the German cDNA consortium.</title>
        <authorList>
            <person name="Bechtel S."/>
            <person name="Rosenfelder H."/>
            <person name="Duda A."/>
            <person name="Schmidt C.P."/>
            <person name="Ernst U."/>
            <person name="Wellenreuther R."/>
            <person name="Mehrle A."/>
            <person name="Schuster C."/>
            <person name="Bahr A."/>
            <person name="Bloecker H."/>
            <person name="Heubner D."/>
            <person name="Hoerlein A."/>
            <person name="Michel G."/>
            <person name="Wedler H."/>
            <person name="Koehrer K."/>
            <person name="Ottenwaelder B."/>
            <person name="Poustka A."/>
            <person name="Wiemann S."/>
            <person name="Schupp I."/>
        </authorList>
    </citation>
    <scope>NUCLEOTIDE SEQUENCE [LARGE SCALE MRNA] OF 305-839 (ISOFORMS 1/2)</scope>
    <source>
        <tissue>Brain</tissue>
    </source>
</reference>
<reference key="7">
    <citation type="journal article" date="2017" name="Nat. Struct. Mol. Biol.">
        <title>Site-specific mapping of the human SUMO proteome reveals co-modification with phosphorylation.</title>
        <authorList>
            <person name="Hendriks I.A."/>
            <person name="Lyon D."/>
            <person name="Young C."/>
            <person name="Jensen L.J."/>
            <person name="Vertegaal A.C."/>
            <person name="Nielsen M.L."/>
        </authorList>
    </citation>
    <scope>SUMOYLATION [LARGE SCALE ANALYSIS] AT LYS-827</scope>
    <scope>IDENTIFICATION BY MASS SPECTROMETRY [LARGE SCALE ANALYSIS]</scope>
</reference>
<reference key="8">
    <citation type="submission" date="2007-10" db="PDB data bank">
        <title>Solution structure of the C2H2 type zinc finger region of human zinc finger protein 347.</title>
        <authorList>
            <consortium name="RIKEN structural genomics initiative (RSGI)"/>
        </authorList>
    </citation>
    <scope>STRUCTURE BY NMR OF 282-792</scope>
</reference>
<feature type="chain" id="PRO_0000047545" description="Zinc finger protein 347">
    <location>
        <begin position="1"/>
        <end position="839"/>
    </location>
</feature>
<feature type="domain" description="KRAB" evidence="3">
    <location>
        <begin position="8"/>
        <end position="79"/>
    </location>
</feature>
<feature type="zinc finger region" description="C2H2-type 1; degenerate" evidence="2">
    <location>
        <begin position="261"/>
        <end position="283"/>
    </location>
</feature>
<feature type="zinc finger region" description="C2H2-type 2" evidence="2">
    <location>
        <begin position="289"/>
        <end position="311"/>
    </location>
</feature>
<feature type="zinc finger region" description="C2H2-type 3" evidence="2">
    <location>
        <begin position="317"/>
        <end position="339"/>
    </location>
</feature>
<feature type="zinc finger region" description="C2H2-type 4" evidence="2">
    <location>
        <begin position="345"/>
        <end position="367"/>
    </location>
</feature>
<feature type="zinc finger region" description="C2H2-type 5" evidence="2">
    <location>
        <begin position="373"/>
        <end position="395"/>
    </location>
</feature>
<feature type="zinc finger region" description="C2H2-type 6" evidence="2">
    <location>
        <begin position="401"/>
        <end position="423"/>
    </location>
</feature>
<feature type="zinc finger region" description="C2H2-type 7" evidence="2">
    <location>
        <begin position="429"/>
        <end position="451"/>
    </location>
</feature>
<feature type="zinc finger region" description="C2H2-type 8" evidence="2">
    <location>
        <begin position="457"/>
        <end position="479"/>
    </location>
</feature>
<feature type="zinc finger region" description="C2H2-type 9" evidence="2">
    <location>
        <begin position="485"/>
        <end position="507"/>
    </location>
</feature>
<feature type="zinc finger region" description="C2H2-type 10" evidence="2">
    <location>
        <begin position="513"/>
        <end position="535"/>
    </location>
</feature>
<feature type="zinc finger region" description="C2H2-type 11" evidence="2">
    <location>
        <begin position="541"/>
        <end position="563"/>
    </location>
</feature>
<feature type="zinc finger region" description="C2H2-type 12" evidence="2">
    <location>
        <begin position="569"/>
        <end position="591"/>
    </location>
</feature>
<feature type="zinc finger region" description="C2H2-type 13" evidence="2">
    <location>
        <begin position="597"/>
        <end position="619"/>
    </location>
</feature>
<feature type="zinc finger region" description="C2H2-type 14; degenerate" evidence="2">
    <location>
        <begin position="625"/>
        <end position="647"/>
    </location>
</feature>
<feature type="zinc finger region" description="C2H2-type 15" evidence="2">
    <location>
        <begin position="653"/>
        <end position="675"/>
    </location>
</feature>
<feature type="zinc finger region" description="C2H2-type 16" evidence="2">
    <location>
        <begin position="681"/>
        <end position="703"/>
    </location>
</feature>
<feature type="zinc finger region" description="C2H2-type 17" evidence="2">
    <location>
        <begin position="709"/>
        <end position="731"/>
    </location>
</feature>
<feature type="zinc finger region" description="C2H2-type 18" evidence="2">
    <location>
        <begin position="737"/>
        <end position="759"/>
    </location>
</feature>
<feature type="zinc finger region" description="C2H2-type 19" evidence="2">
    <location>
        <begin position="765"/>
        <end position="787"/>
    </location>
</feature>
<feature type="zinc finger region" description="C2H2-type 20; degenerate" evidence="2">
    <location>
        <begin position="790"/>
        <end position="812"/>
    </location>
</feature>
<feature type="cross-link" description="Glycyl lysine isopeptide (Lys-Gly) (interchain with G-Cter in SUMO2)" evidence="1">
    <location>
        <position position="253"/>
    </location>
</feature>
<feature type="cross-link" description="Glycyl lysine isopeptide (Lys-Gly) (interchain with G-Cter in SUMO2)" evidence="9">
    <location>
        <position position="827"/>
    </location>
</feature>
<feature type="splice variant" id="VSP_046841" description="In isoform 2." evidence="7">
    <original>L</original>
    <variation>LA</variation>
    <location>
        <position position="47"/>
    </location>
</feature>
<feature type="sequence variant" id="VAR_052815" description="In dbSNP:rs34656962.">
    <original>M</original>
    <variation>V</variation>
    <location>
        <position position="117"/>
    </location>
</feature>
<feature type="sequence variant" id="VAR_059913" description="In dbSNP:rs2195310." evidence="4 5 6">
    <original>N</original>
    <variation>D</variation>
    <location>
        <position position="264"/>
    </location>
</feature>
<feature type="sequence conflict" description="In Ref. 2; BAG53339." evidence="8" ref="2">
    <original>N</original>
    <variation>D</variation>
    <location>
        <position position="215"/>
    </location>
</feature>
<feature type="sequence conflict" description="In Ref. 2; BAG53339." evidence="8" ref="2">
    <original>K</original>
    <variation>R</variation>
    <location>
        <position position="253"/>
    </location>
</feature>
<feature type="strand" evidence="12">
    <location>
        <begin position="285"/>
        <end position="287"/>
    </location>
</feature>
<feature type="turn" evidence="12">
    <location>
        <begin position="292"/>
        <end position="294"/>
    </location>
</feature>
<feature type="strand" evidence="12">
    <location>
        <begin position="297"/>
        <end position="301"/>
    </location>
</feature>
<feature type="helix" evidence="12">
    <location>
        <begin position="302"/>
        <end position="308"/>
    </location>
</feature>
<feature type="helix" evidence="12">
    <location>
        <begin position="309"/>
        <end position="311"/>
    </location>
</feature>
<feature type="strand" evidence="10">
    <location>
        <begin position="320"/>
        <end position="322"/>
    </location>
</feature>
<feature type="strand" evidence="10">
    <location>
        <begin position="325"/>
        <end position="328"/>
    </location>
</feature>
<feature type="helix" evidence="10">
    <location>
        <begin position="329"/>
        <end position="336"/>
    </location>
</feature>
<feature type="helix" evidence="10">
    <location>
        <begin position="338"/>
        <end position="340"/>
    </location>
</feature>
<feature type="strand" evidence="14">
    <location>
        <begin position="348"/>
        <end position="350"/>
    </location>
</feature>
<feature type="helix" evidence="14">
    <location>
        <begin position="357"/>
        <end position="364"/>
    </location>
</feature>
<feature type="turn" evidence="14">
    <location>
        <begin position="365"/>
        <end position="369"/>
    </location>
</feature>
<feature type="strand" evidence="16">
    <location>
        <begin position="381"/>
        <end position="384"/>
    </location>
</feature>
<feature type="helix" evidence="16">
    <location>
        <begin position="385"/>
        <end position="395"/>
    </location>
</feature>
<feature type="strand" evidence="22">
    <location>
        <begin position="396"/>
        <end position="398"/>
    </location>
</feature>
<feature type="strand" evidence="22">
    <location>
        <begin position="400"/>
        <end position="402"/>
    </location>
</feature>
<feature type="strand" evidence="22">
    <location>
        <begin position="404"/>
        <end position="406"/>
    </location>
</feature>
<feature type="strand" evidence="22">
    <location>
        <begin position="409"/>
        <end position="412"/>
    </location>
</feature>
<feature type="helix" evidence="22">
    <location>
        <begin position="413"/>
        <end position="423"/>
    </location>
</feature>
<feature type="strand" evidence="22">
    <location>
        <begin position="424"/>
        <end position="427"/>
    </location>
</feature>
<feature type="turn" evidence="17">
    <location>
        <begin position="460"/>
        <end position="462"/>
    </location>
</feature>
<feature type="strand" evidence="17">
    <location>
        <begin position="465"/>
        <end position="468"/>
    </location>
</feature>
<feature type="helix" evidence="17">
    <location>
        <begin position="469"/>
        <end position="476"/>
    </location>
</feature>
<feature type="turn" evidence="17">
    <location>
        <begin position="477"/>
        <end position="479"/>
    </location>
</feature>
<feature type="turn" evidence="18">
    <location>
        <begin position="488"/>
        <end position="491"/>
    </location>
</feature>
<feature type="helix" evidence="18">
    <location>
        <begin position="497"/>
        <end position="504"/>
    </location>
</feature>
<feature type="turn" evidence="18">
    <location>
        <begin position="505"/>
        <end position="507"/>
    </location>
</feature>
<feature type="strand" evidence="15">
    <location>
        <begin position="512"/>
        <end position="514"/>
    </location>
</feature>
<feature type="turn" evidence="15">
    <location>
        <begin position="516"/>
        <end position="518"/>
    </location>
</feature>
<feature type="helix" evidence="15">
    <location>
        <begin position="525"/>
        <end position="532"/>
    </location>
</feature>
<feature type="helix" evidence="15">
    <location>
        <begin position="533"/>
        <end position="535"/>
    </location>
</feature>
<feature type="strand" evidence="11">
    <location>
        <begin position="540"/>
        <end position="542"/>
    </location>
</feature>
<feature type="strand" evidence="11">
    <location>
        <begin position="544"/>
        <end position="546"/>
    </location>
</feature>
<feature type="strand" evidence="11">
    <location>
        <begin position="549"/>
        <end position="551"/>
    </location>
</feature>
<feature type="helix" evidence="11">
    <location>
        <begin position="553"/>
        <end position="564"/>
    </location>
</feature>
<feature type="strand" evidence="21">
    <location>
        <begin position="572"/>
        <end position="574"/>
    </location>
</feature>
<feature type="helix" evidence="21">
    <location>
        <begin position="581"/>
        <end position="588"/>
    </location>
</feature>
<feature type="turn" evidence="21">
    <location>
        <begin position="589"/>
        <end position="591"/>
    </location>
</feature>
<feature type="strand" evidence="13">
    <location>
        <begin position="594"/>
        <end position="598"/>
    </location>
</feature>
<feature type="strand" evidence="13">
    <location>
        <begin position="600"/>
        <end position="602"/>
    </location>
</feature>
<feature type="strand" evidence="13">
    <location>
        <begin position="605"/>
        <end position="608"/>
    </location>
</feature>
<feature type="helix" evidence="13">
    <location>
        <begin position="609"/>
        <end position="616"/>
    </location>
</feature>
<feature type="turn" evidence="13">
    <location>
        <begin position="617"/>
        <end position="619"/>
    </location>
</feature>
<feature type="strand" evidence="25">
    <location>
        <begin position="651"/>
        <end position="654"/>
    </location>
</feature>
<feature type="strand" evidence="25">
    <location>
        <begin position="656"/>
        <end position="658"/>
    </location>
</feature>
<feature type="strand" evidence="25">
    <location>
        <begin position="661"/>
        <end position="665"/>
    </location>
</feature>
<feature type="helix" evidence="25">
    <location>
        <begin position="666"/>
        <end position="671"/>
    </location>
</feature>
<feature type="strand" evidence="19">
    <location>
        <begin position="676"/>
        <end position="678"/>
    </location>
</feature>
<feature type="strand" evidence="19">
    <location>
        <begin position="680"/>
        <end position="682"/>
    </location>
</feature>
<feature type="helix" evidence="19">
    <location>
        <begin position="693"/>
        <end position="699"/>
    </location>
</feature>
<feature type="helix" evidence="19">
    <location>
        <begin position="700"/>
        <end position="703"/>
    </location>
</feature>
<feature type="strand" evidence="20">
    <location>
        <begin position="708"/>
        <end position="711"/>
    </location>
</feature>
<feature type="turn" evidence="20">
    <location>
        <begin position="712"/>
        <end position="715"/>
    </location>
</feature>
<feature type="helix" evidence="20">
    <location>
        <begin position="721"/>
        <end position="728"/>
    </location>
</feature>
<feature type="turn" evidence="23">
    <location>
        <begin position="740"/>
        <end position="742"/>
    </location>
</feature>
<feature type="helix" evidence="23">
    <location>
        <begin position="749"/>
        <end position="755"/>
    </location>
</feature>
<feature type="helix" evidence="23">
    <location>
        <begin position="756"/>
        <end position="758"/>
    </location>
</feature>
<feature type="turn" evidence="24">
    <location>
        <begin position="768"/>
        <end position="770"/>
    </location>
</feature>
<feature type="helix" evidence="24">
    <location>
        <begin position="777"/>
        <end position="784"/>
    </location>
</feature>
<feature type="turn" evidence="24">
    <location>
        <begin position="785"/>
        <end position="789"/>
    </location>
</feature>
<dbReference type="EMBL" id="AY029765">
    <property type="protein sequence ID" value="AAK37403.1"/>
    <property type="molecule type" value="mRNA"/>
</dbReference>
<dbReference type="EMBL" id="AK096623">
    <property type="protein sequence ID" value="BAG53339.1"/>
    <property type="molecule type" value="mRNA"/>
</dbReference>
<dbReference type="EMBL" id="AC010328">
    <property type="status" value="NOT_ANNOTATED_CDS"/>
    <property type="molecule type" value="Genomic_DNA"/>
</dbReference>
<dbReference type="EMBL" id="AC092070">
    <property type="status" value="NOT_ANNOTATED_CDS"/>
    <property type="molecule type" value="Genomic_DNA"/>
</dbReference>
<dbReference type="EMBL" id="CH471135">
    <property type="protein sequence ID" value="EAW72119.1"/>
    <property type="molecule type" value="Genomic_DNA"/>
</dbReference>
<dbReference type="EMBL" id="BC136255">
    <property type="protein sequence ID" value="AAI36256.1"/>
    <property type="molecule type" value="mRNA"/>
</dbReference>
<dbReference type="EMBL" id="AL713691">
    <property type="protein sequence ID" value="CAD28491.1"/>
    <property type="molecule type" value="mRNA"/>
</dbReference>
<dbReference type="CCDS" id="CCDS33097.1">
    <molecule id="Q96SE7-1"/>
</dbReference>
<dbReference type="CCDS" id="CCDS54314.1">
    <molecule id="Q96SE7-2"/>
</dbReference>
<dbReference type="RefSeq" id="NP_001166145.1">
    <molecule id="Q96SE7-2"/>
    <property type="nucleotide sequence ID" value="NM_001172674.2"/>
</dbReference>
<dbReference type="RefSeq" id="NP_001166146.1">
    <molecule id="Q96SE7-2"/>
    <property type="nucleotide sequence ID" value="NM_001172675.2"/>
</dbReference>
<dbReference type="RefSeq" id="NP_115973.2">
    <molecule id="Q96SE7-1"/>
    <property type="nucleotide sequence ID" value="NM_032584.3"/>
</dbReference>
<dbReference type="RefSeq" id="XP_005259392.1">
    <property type="nucleotide sequence ID" value="XM_005259335.4"/>
</dbReference>
<dbReference type="RefSeq" id="XP_016882873.1">
    <property type="nucleotide sequence ID" value="XM_017027384.1"/>
</dbReference>
<dbReference type="PDB" id="2EMA">
    <property type="method" value="NMR"/>
    <property type="chains" value="A=312-344"/>
</dbReference>
<dbReference type="PDB" id="2EMP">
    <property type="method" value="NMR"/>
    <property type="chains" value="A=536-568"/>
</dbReference>
<dbReference type="PDB" id="2EN4">
    <property type="method" value="NMR"/>
    <property type="chains" value="A=284-316"/>
</dbReference>
<dbReference type="PDB" id="2ENE">
    <property type="method" value="NMR"/>
    <property type="chains" value="A=592-624"/>
</dbReference>
<dbReference type="PDB" id="2ENF">
    <property type="method" value="NMR"/>
    <property type="chains" value="A=340-372"/>
</dbReference>
<dbReference type="PDB" id="2EOE">
    <property type="method" value="NMR"/>
    <property type="chains" value="A=508-540"/>
</dbReference>
<dbReference type="PDB" id="2EOW">
    <property type="method" value="NMR"/>
    <property type="chains" value="A=368-400"/>
</dbReference>
<dbReference type="PDB" id="2EQ0">
    <property type="method" value="NMR"/>
    <property type="chains" value="A=452-484"/>
</dbReference>
<dbReference type="PDB" id="2EQ1">
    <property type="method" value="NMR"/>
    <property type="chains" value="A=480-512"/>
</dbReference>
<dbReference type="PDB" id="2EQ2">
    <property type="method" value="NMR"/>
    <property type="chains" value="A=676-708"/>
</dbReference>
<dbReference type="PDB" id="2EQ3">
    <property type="method" value="NMR"/>
    <property type="chains" value="A=704-736"/>
</dbReference>
<dbReference type="PDB" id="2YTI">
    <property type="method" value="NMR"/>
    <property type="chains" value="A=564-596"/>
</dbReference>
<dbReference type="PDB" id="2YTK">
    <property type="method" value="NMR"/>
    <property type="chains" value="A=396-428"/>
</dbReference>
<dbReference type="PDB" id="2YTN">
    <property type="method" value="NMR"/>
    <property type="chains" value="A=732-764"/>
</dbReference>
<dbReference type="PDB" id="2YTR">
    <property type="method" value="NMR"/>
    <property type="chains" value="A=760-792"/>
</dbReference>
<dbReference type="PDB" id="2YU8">
    <property type="method" value="NMR"/>
    <property type="chains" value="A=648-680"/>
</dbReference>
<dbReference type="PDBsum" id="2EMA"/>
<dbReference type="PDBsum" id="2EMP"/>
<dbReference type="PDBsum" id="2EN4"/>
<dbReference type="PDBsum" id="2ENE"/>
<dbReference type="PDBsum" id="2ENF"/>
<dbReference type="PDBsum" id="2EOE"/>
<dbReference type="PDBsum" id="2EOW"/>
<dbReference type="PDBsum" id="2EQ0"/>
<dbReference type="PDBsum" id="2EQ1"/>
<dbReference type="PDBsum" id="2EQ2"/>
<dbReference type="PDBsum" id="2EQ3"/>
<dbReference type="PDBsum" id="2YTI"/>
<dbReference type="PDBsum" id="2YTK"/>
<dbReference type="PDBsum" id="2YTN"/>
<dbReference type="PDBsum" id="2YTR"/>
<dbReference type="PDBsum" id="2YU8"/>
<dbReference type="SMR" id="Q96SE7"/>
<dbReference type="FunCoup" id="Q96SE7">
    <property type="interactions" value="2"/>
</dbReference>
<dbReference type="IntAct" id="Q96SE7">
    <property type="interactions" value="1"/>
</dbReference>
<dbReference type="STRING" id="9606.ENSP00000405218"/>
<dbReference type="GlyGen" id="Q96SE7">
    <property type="glycosylation" value="1 site, 1 O-linked glycan (1 site)"/>
</dbReference>
<dbReference type="iPTMnet" id="Q96SE7"/>
<dbReference type="PhosphoSitePlus" id="Q96SE7"/>
<dbReference type="BioMuta" id="ZNF347"/>
<dbReference type="DMDM" id="296453051"/>
<dbReference type="jPOST" id="Q96SE7"/>
<dbReference type="MassIVE" id="Q96SE7"/>
<dbReference type="PaxDb" id="9606-ENSP00000405218"/>
<dbReference type="PeptideAtlas" id="Q96SE7"/>
<dbReference type="ProteomicsDB" id="33993"/>
<dbReference type="ProteomicsDB" id="78108">
    <molecule id="Q96SE7-1"/>
</dbReference>
<dbReference type="Antibodypedia" id="19156">
    <property type="antibodies" value="9 antibodies from 7 providers"/>
</dbReference>
<dbReference type="DNASU" id="84671"/>
<dbReference type="Ensembl" id="ENST00000334197.12">
    <molecule id="Q96SE7-1"/>
    <property type="protein sequence ID" value="ENSP00000334146.6"/>
    <property type="gene ID" value="ENSG00000197937.13"/>
</dbReference>
<dbReference type="Ensembl" id="ENST00000452676.6">
    <molecule id="Q96SE7-2"/>
    <property type="protein sequence ID" value="ENSP00000405218.2"/>
    <property type="gene ID" value="ENSG00000197937.13"/>
</dbReference>
<dbReference type="Ensembl" id="ENST00000601469.2">
    <molecule id="Q96SE7-2"/>
    <property type="protein sequence ID" value="ENSP00000471712.2"/>
    <property type="gene ID" value="ENSG00000197937.13"/>
</dbReference>
<dbReference type="GeneID" id="84671"/>
<dbReference type="KEGG" id="hsa:84671"/>
<dbReference type="MANE-Select" id="ENST00000334197.12">
    <property type="protein sequence ID" value="ENSP00000334146.6"/>
    <property type="RefSeq nucleotide sequence ID" value="NM_032584.3"/>
    <property type="RefSeq protein sequence ID" value="NP_115973.2"/>
</dbReference>
<dbReference type="UCSC" id="uc002qbb.3">
    <molecule id="Q96SE7-1"/>
    <property type="organism name" value="human"/>
</dbReference>
<dbReference type="AGR" id="HGNC:16447"/>
<dbReference type="CTD" id="84671"/>
<dbReference type="DisGeNET" id="84671"/>
<dbReference type="GeneCards" id="ZNF347"/>
<dbReference type="HGNC" id="HGNC:16447">
    <property type="gene designation" value="ZNF347"/>
</dbReference>
<dbReference type="HPA" id="ENSG00000197937">
    <property type="expression patterns" value="Low tissue specificity"/>
</dbReference>
<dbReference type="neXtProt" id="NX_Q96SE7"/>
<dbReference type="OpenTargets" id="ENSG00000197937"/>
<dbReference type="PharmGKB" id="PA38143"/>
<dbReference type="VEuPathDB" id="HostDB:ENSG00000197937"/>
<dbReference type="eggNOG" id="KOG1721">
    <property type="taxonomic scope" value="Eukaryota"/>
</dbReference>
<dbReference type="GeneTree" id="ENSGT00940000164205"/>
<dbReference type="HOGENOM" id="CLU_002678_17_0_1"/>
<dbReference type="InParanoid" id="Q96SE7"/>
<dbReference type="OMA" id="KYNVWKV"/>
<dbReference type="OrthoDB" id="9411774at2759"/>
<dbReference type="PAN-GO" id="Q96SE7">
    <property type="GO annotations" value="4 GO annotations based on evolutionary models"/>
</dbReference>
<dbReference type="PhylomeDB" id="Q96SE7"/>
<dbReference type="TreeFam" id="TF341892"/>
<dbReference type="PathwayCommons" id="Q96SE7"/>
<dbReference type="Reactome" id="R-HSA-212436">
    <property type="pathway name" value="Generic Transcription Pathway"/>
</dbReference>
<dbReference type="SignaLink" id="Q96SE7"/>
<dbReference type="BioGRID-ORCS" id="84671">
    <property type="hits" value="7 hits in 1144 CRISPR screens"/>
</dbReference>
<dbReference type="ChiTaRS" id="ZNF347">
    <property type="organism name" value="human"/>
</dbReference>
<dbReference type="EvolutionaryTrace" id="Q96SE7"/>
<dbReference type="GenomeRNAi" id="84671"/>
<dbReference type="Pharos" id="Q96SE7">
    <property type="development level" value="Tdark"/>
</dbReference>
<dbReference type="PRO" id="PR:Q96SE7"/>
<dbReference type="Proteomes" id="UP000005640">
    <property type="component" value="Chromosome 19"/>
</dbReference>
<dbReference type="RNAct" id="Q96SE7">
    <property type="molecule type" value="protein"/>
</dbReference>
<dbReference type="Bgee" id="ENSG00000197937">
    <property type="expression patterns" value="Expressed in adrenal tissue and 114 other cell types or tissues"/>
</dbReference>
<dbReference type="ExpressionAtlas" id="Q96SE7">
    <property type="expression patterns" value="baseline and differential"/>
</dbReference>
<dbReference type="GO" id="GO:0005634">
    <property type="term" value="C:nucleus"/>
    <property type="evidence" value="ECO:0000318"/>
    <property type="project" value="GO_Central"/>
</dbReference>
<dbReference type="GO" id="GO:0000981">
    <property type="term" value="F:DNA-binding transcription factor activity, RNA polymerase II-specific"/>
    <property type="evidence" value="ECO:0000318"/>
    <property type="project" value="GO_Central"/>
</dbReference>
<dbReference type="GO" id="GO:0000978">
    <property type="term" value="F:RNA polymerase II cis-regulatory region sequence-specific DNA binding"/>
    <property type="evidence" value="ECO:0000318"/>
    <property type="project" value="GO_Central"/>
</dbReference>
<dbReference type="GO" id="GO:0008270">
    <property type="term" value="F:zinc ion binding"/>
    <property type="evidence" value="ECO:0007669"/>
    <property type="project" value="UniProtKB-KW"/>
</dbReference>
<dbReference type="GO" id="GO:0006357">
    <property type="term" value="P:regulation of transcription by RNA polymerase II"/>
    <property type="evidence" value="ECO:0000318"/>
    <property type="project" value="GO_Central"/>
</dbReference>
<dbReference type="CDD" id="cd07765">
    <property type="entry name" value="KRAB_A-box"/>
    <property type="match status" value="1"/>
</dbReference>
<dbReference type="FunFam" id="3.30.160.60:FF:004137">
    <property type="match status" value="6"/>
</dbReference>
<dbReference type="FunFam" id="3.30.160.60:FF:002278">
    <property type="entry name" value="Zinc finger protein 320"/>
    <property type="match status" value="1"/>
</dbReference>
<dbReference type="FunFam" id="3.30.160.60:FF:000133">
    <property type="entry name" value="Zinc finger protein 347"/>
    <property type="match status" value="5"/>
</dbReference>
<dbReference type="FunFam" id="3.30.160.60:FF:002402">
    <property type="entry name" value="Zinc finger protein 347"/>
    <property type="match status" value="5"/>
</dbReference>
<dbReference type="FunFam" id="3.30.160.60:FF:002421">
    <property type="entry name" value="Zinc finger protein 347"/>
    <property type="match status" value="1"/>
</dbReference>
<dbReference type="FunFam" id="3.30.160.60:FF:002615">
    <property type="entry name" value="Zinc finger protein 347"/>
    <property type="match status" value="1"/>
</dbReference>
<dbReference type="FunFam" id="3.30.160.60:FF:002090">
    <property type="entry name" value="Zinc finger protein 473"/>
    <property type="match status" value="1"/>
</dbReference>
<dbReference type="FunFam" id="3.30.160.60:FF:002254">
    <property type="entry name" value="Zinc finger protein 540"/>
    <property type="match status" value="1"/>
</dbReference>
<dbReference type="FunFam" id="3.30.160.60:FF:000197">
    <property type="entry name" value="Zinc finger protein 606"/>
    <property type="match status" value="3"/>
</dbReference>
<dbReference type="FunFam" id="3.30.160.60:FF:001090">
    <property type="entry name" value="zinc finger protein 629 isoform X2"/>
    <property type="match status" value="1"/>
</dbReference>
<dbReference type="Gene3D" id="6.10.140.140">
    <property type="match status" value="1"/>
</dbReference>
<dbReference type="Gene3D" id="3.30.160.60">
    <property type="entry name" value="Classic Zinc Finger"/>
    <property type="match status" value="20"/>
</dbReference>
<dbReference type="InterPro" id="IPR001909">
    <property type="entry name" value="KRAB"/>
</dbReference>
<dbReference type="InterPro" id="IPR036051">
    <property type="entry name" value="KRAB_dom_sf"/>
</dbReference>
<dbReference type="InterPro" id="IPR036236">
    <property type="entry name" value="Znf_C2H2_sf"/>
</dbReference>
<dbReference type="InterPro" id="IPR013087">
    <property type="entry name" value="Znf_C2H2_type"/>
</dbReference>
<dbReference type="PANTHER" id="PTHR23235:SF178">
    <property type="entry name" value="C2H2-TYPE DOMAIN-CONTAINING PROTEIN-RELATED"/>
    <property type="match status" value="1"/>
</dbReference>
<dbReference type="PANTHER" id="PTHR23235">
    <property type="entry name" value="KRUEPPEL-LIKE TRANSCRIPTION FACTOR"/>
    <property type="match status" value="1"/>
</dbReference>
<dbReference type="Pfam" id="PF01352">
    <property type="entry name" value="KRAB"/>
    <property type="match status" value="1"/>
</dbReference>
<dbReference type="Pfam" id="PF00096">
    <property type="entry name" value="zf-C2H2"/>
    <property type="match status" value="18"/>
</dbReference>
<dbReference type="SMART" id="SM00349">
    <property type="entry name" value="KRAB"/>
    <property type="match status" value="1"/>
</dbReference>
<dbReference type="SMART" id="SM00355">
    <property type="entry name" value="ZnF_C2H2"/>
    <property type="match status" value="19"/>
</dbReference>
<dbReference type="SUPFAM" id="SSF57667">
    <property type="entry name" value="beta-beta-alpha zinc fingers"/>
    <property type="match status" value="12"/>
</dbReference>
<dbReference type="SUPFAM" id="SSF109640">
    <property type="entry name" value="KRAB domain (Kruppel-associated box)"/>
    <property type="match status" value="1"/>
</dbReference>
<dbReference type="PROSITE" id="PS50805">
    <property type="entry name" value="KRAB"/>
    <property type="match status" value="1"/>
</dbReference>
<dbReference type="PROSITE" id="PS00028">
    <property type="entry name" value="ZINC_FINGER_C2H2_1"/>
    <property type="match status" value="17"/>
</dbReference>
<dbReference type="PROSITE" id="PS50157">
    <property type="entry name" value="ZINC_FINGER_C2H2_2"/>
    <property type="match status" value="20"/>
</dbReference>
<comment type="function">
    <text>May be involved in transcriptional regulation.</text>
</comment>
<comment type="subcellular location">
    <subcellularLocation>
        <location evidence="8">Nucleus</location>
    </subcellularLocation>
</comment>
<comment type="alternative products">
    <event type="alternative splicing"/>
    <isoform>
        <id>Q96SE7-1</id>
        <name>1</name>
        <sequence type="displayed"/>
    </isoform>
    <isoform>
        <id>Q96SE7-2</id>
        <name>2</name>
        <sequence type="described" ref="VSP_046841"/>
    </isoform>
</comment>
<comment type="similarity">
    <text evidence="8">Belongs to the krueppel C2H2-type zinc-finger protein family.</text>
</comment>
<gene>
    <name type="primary">ZNF347</name>
    <name type="synonym">ZNF1111</name>
</gene>
<accession>Q96SE7</accession>
<accession>B3KU77</accession>
<accession>B9EG59</accession>
<accession>G5E9N4</accession>
<accession>Q8TCN1</accession>
<sequence length="839" mass="95770">MALTQGQVTFRDVAIEFSQEEWTCLDPAQRTLYRDVMLENYRNLASLGISCFDLSIISMLEQGKEPFTLESQVQIAGNPDGWEWIKAVITALSSEFVMKDLLHKGKSNTGEVFQTVMLERQESQDIEGCSFREVQKNTHGLEYQCRDAEGNYKGVLLTQEGNLTHGRDEHDKRDARNKLIKNQLGLSLQSHLPELQLFQYEGKIYECNQVEKSFNNNSSVSPPQQMPYNVKTHISKKYLKDFISSLLLTQGQKANNWGSPYKSNGCGMVFPQNSHLASHQRSHTKEKPYKCYECGKAFRTRSNLTTHQVIHTGEKRYKCNECGKVFSRNSQLSQHQKIHTGEKPYKCNECGKVFTQNSHLVRHRGIHTGEKPYKCNECGKAFRARSSLAIHQATHSGEKPYKCNECGKVFTQNSHLTNHWRIHTGEKPYKCNECGKAFGVRSSLAIHLVIHTGEKPYKCHECGKVFRRNSHLARHQLIHTGEKPYKCNECGKAFRAHSNLTTHQVIHTGEKPYKCNECGKVFTQNSHLANHQRIHTGVKPYMCNECGKAFSVYSSLTTHQVIHTGEKPYKCNECGKVFTQNSHLARHRGIHTGEKPYKCNECGKVFRHNSYLSRHQRIHTGEKPYKYNEYGKAFSEHSNLTTHQVIHTGEKPYKCNECGKVFTQNSHLARHRRVHTGGKPYQCNECGKAFSQTSKLARHQRVHTGEKPYECNQCGKAFSVRSSLTTHQAIHTGKKPYKCNECGKVFTQNSHLARHRGIHTGEKPYKCNECGKAFSQTSKLARHQRIHTGEKPYECGKPFSICSSLTTHQTIHTGGKPYKCNVWKVLKSEFKPCKPSQNS</sequence>
<name>ZN347_HUMAN</name>
<organism>
    <name type="scientific">Homo sapiens</name>
    <name type="common">Human</name>
    <dbReference type="NCBI Taxonomy" id="9606"/>
    <lineage>
        <taxon>Eukaryota</taxon>
        <taxon>Metazoa</taxon>
        <taxon>Chordata</taxon>
        <taxon>Craniata</taxon>
        <taxon>Vertebrata</taxon>
        <taxon>Euteleostomi</taxon>
        <taxon>Mammalia</taxon>
        <taxon>Eutheria</taxon>
        <taxon>Euarchontoglires</taxon>
        <taxon>Primates</taxon>
        <taxon>Haplorrhini</taxon>
        <taxon>Catarrhini</taxon>
        <taxon>Hominidae</taxon>
        <taxon>Homo</taxon>
    </lineage>
</organism>
<proteinExistence type="evidence at protein level"/>
<evidence type="ECO:0000250" key="1">
    <source>
        <dbReference type="UniProtKB" id="Q6ZN19"/>
    </source>
</evidence>
<evidence type="ECO:0000255" key="2">
    <source>
        <dbReference type="PROSITE-ProRule" id="PRU00042"/>
    </source>
</evidence>
<evidence type="ECO:0000255" key="3">
    <source>
        <dbReference type="PROSITE-ProRule" id="PRU00119"/>
    </source>
</evidence>
<evidence type="ECO:0000269" key="4">
    <source>
    </source>
</evidence>
<evidence type="ECO:0000269" key="5">
    <source>
    </source>
</evidence>
<evidence type="ECO:0000269" key="6">
    <source ref="1"/>
</evidence>
<evidence type="ECO:0000303" key="7">
    <source>
    </source>
</evidence>
<evidence type="ECO:0000305" key="8"/>
<evidence type="ECO:0007744" key="9">
    <source>
    </source>
</evidence>
<evidence type="ECO:0007829" key="10">
    <source>
        <dbReference type="PDB" id="2EMA"/>
    </source>
</evidence>
<evidence type="ECO:0007829" key="11">
    <source>
        <dbReference type="PDB" id="2EMP"/>
    </source>
</evidence>
<evidence type="ECO:0007829" key="12">
    <source>
        <dbReference type="PDB" id="2EN4"/>
    </source>
</evidence>
<evidence type="ECO:0007829" key="13">
    <source>
        <dbReference type="PDB" id="2ENE"/>
    </source>
</evidence>
<evidence type="ECO:0007829" key="14">
    <source>
        <dbReference type="PDB" id="2ENF"/>
    </source>
</evidence>
<evidence type="ECO:0007829" key="15">
    <source>
        <dbReference type="PDB" id="2EOE"/>
    </source>
</evidence>
<evidence type="ECO:0007829" key="16">
    <source>
        <dbReference type="PDB" id="2EOW"/>
    </source>
</evidence>
<evidence type="ECO:0007829" key="17">
    <source>
        <dbReference type="PDB" id="2EQ0"/>
    </source>
</evidence>
<evidence type="ECO:0007829" key="18">
    <source>
        <dbReference type="PDB" id="2EQ1"/>
    </source>
</evidence>
<evidence type="ECO:0007829" key="19">
    <source>
        <dbReference type="PDB" id="2EQ2"/>
    </source>
</evidence>
<evidence type="ECO:0007829" key="20">
    <source>
        <dbReference type="PDB" id="2EQ3"/>
    </source>
</evidence>
<evidence type="ECO:0007829" key="21">
    <source>
        <dbReference type="PDB" id="2YTI"/>
    </source>
</evidence>
<evidence type="ECO:0007829" key="22">
    <source>
        <dbReference type="PDB" id="2YTK"/>
    </source>
</evidence>
<evidence type="ECO:0007829" key="23">
    <source>
        <dbReference type="PDB" id="2YTN"/>
    </source>
</evidence>
<evidence type="ECO:0007829" key="24">
    <source>
        <dbReference type="PDB" id="2YTR"/>
    </source>
</evidence>
<evidence type="ECO:0007829" key="25">
    <source>
        <dbReference type="PDB" id="2YU8"/>
    </source>
</evidence>
<protein>
    <recommendedName>
        <fullName>Zinc finger protein 347</fullName>
    </recommendedName>
    <alternativeName>
        <fullName>Zinc finger protein 1111</fullName>
    </alternativeName>
</protein>